<dbReference type="EMBL" id="L77117">
    <property type="protein sequence ID" value="AAB98666.1"/>
    <property type="molecule type" value="Genomic_DNA"/>
</dbReference>
<dbReference type="PIR" id="H64383">
    <property type="entry name" value="H64383"/>
</dbReference>
<dbReference type="RefSeq" id="WP_010870177.1">
    <property type="nucleotide sequence ID" value="NC_000909.1"/>
</dbReference>
<dbReference type="SMR" id="Q58086"/>
<dbReference type="FunCoup" id="Q58086">
    <property type="interactions" value="18"/>
</dbReference>
<dbReference type="STRING" id="243232.MJ_0672"/>
<dbReference type="TCDB" id="2.A.47.5.1">
    <property type="family name" value="the divalent anion:na(+) symporter (dass) family"/>
</dbReference>
<dbReference type="PaxDb" id="243232-MJ_0672"/>
<dbReference type="EnsemblBacteria" id="AAB98666">
    <property type="protein sequence ID" value="AAB98666"/>
    <property type="gene ID" value="MJ_0672"/>
</dbReference>
<dbReference type="GeneID" id="1451538"/>
<dbReference type="KEGG" id="mja:MJ_0672"/>
<dbReference type="eggNOG" id="arCOG00237">
    <property type="taxonomic scope" value="Archaea"/>
</dbReference>
<dbReference type="HOGENOM" id="CLU_005170_0_2_2"/>
<dbReference type="InParanoid" id="Q58086"/>
<dbReference type="OrthoDB" id="19068at2157"/>
<dbReference type="PhylomeDB" id="Q58086"/>
<dbReference type="Proteomes" id="UP000000805">
    <property type="component" value="Chromosome"/>
</dbReference>
<dbReference type="GO" id="GO:0005886">
    <property type="term" value="C:plasma membrane"/>
    <property type="evidence" value="ECO:0000318"/>
    <property type="project" value="GO_Central"/>
</dbReference>
<dbReference type="GO" id="GO:0015141">
    <property type="term" value="F:succinate transmembrane transporter activity"/>
    <property type="evidence" value="ECO:0007669"/>
    <property type="project" value="UniProtKB-ARBA"/>
</dbReference>
<dbReference type="GO" id="GO:0022857">
    <property type="term" value="F:transmembrane transporter activity"/>
    <property type="evidence" value="ECO:0000318"/>
    <property type="project" value="GO_Central"/>
</dbReference>
<dbReference type="GO" id="GO:0055085">
    <property type="term" value="P:transmembrane transport"/>
    <property type="evidence" value="ECO:0000318"/>
    <property type="project" value="GO_Central"/>
</dbReference>
<dbReference type="CDD" id="cd01115">
    <property type="entry name" value="SLC13_permease"/>
    <property type="match status" value="1"/>
</dbReference>
<dbReference type="InterPro" id="IPR004680">
    <property type="entry name" value="Cit_transptr-like_dom"/>
</dbReference>
<dbReference type="InterPro" id="IPR031312">
    <property type="entry name" value="Na/sul_symport_CS"/>
</dbReference>
<dbReference type="InterPro" id="IPR001898">
    <property type="entry name" value="SLC13A/DASS"/>
</dbReference>
<dbReference type="NCBIfam" id="TIGR00785">
    <property type="entry name" value="dass"/>
    <property type="match status" value="1"/>
</dbReference>
<dbReference type="PANTHER" id="PTHR10283">
    <property type="entry name" value="SOLUTE CARRIER FAMILY 13 MEMBER"/>
    <property type="match status" value="1"/>
</dbReference>
<dbReference type="PANTHER" id="PTHR10283:SF82">
    <property type="entry name" value="SOLUTE CARRIER FAMILY 13 MEMBER 2"/>
    <property type="match status" value="1"/>
</dbReference>
<dbReference type="Pfam" id="PF03600">
    <property type="entry name" value="CitMHS"/>
    <property type="match status" value="1"/>
</dbReference>
<dbReference type="PROSITE" id="PS01271">
    <property type="entry name" value="NA_SULFATE"/>
    <property type="match status" value="1"/>
</dbReference>
<protein>
    <recommendedName>
        <fullName>Uncharacterized transporter MJ0672</fullName>
    </recommendedName>
</protein>
<gene>
    <name type="ordered locus">MJ0672</name>
</gene>
<evidence type="ECO:0000255" key="1"/>
<evidence type="ECO:0000305" key="2"/>
<sequence length="432" mass="47542">MRLSKEFIGLGIITASLIFGSSLPDIYKGIVILIVAGCLWFFELLPLPVTSLAIPIMAVFLGIFNLKEALTYFAHPIIFLFLGGFMLAQALKNHNLDKFIAYKLLNYGKDFKTTCFLMFLSAYFLSMWISNTSATLILLPIALGLLHKKTGKLRDFLLLGVAYSASIGGIATIIGSPPNAIASSYLDYGFFSWFKVGFPISLLLFLICTLTLYIYFKKWIPKEDIAIQARMELSRNAYKLLVIFVLIASLWIISDYLSEIFNVQYFDSVIAIFAIILLFVFNLVEVNDFKKIDWGTLILFGGALCLGGVIVKSGANTFLSEKLIAILGNLTPIVLLFLVVTITIILTNFISNTGLTGIIVPILFGVSLGIPKEILILAVGMSASCSFILPVGTPPNAIVYSEGVKKEEMMKIGMILSILSAAVITLYSILYL</sequence>
<reference key="1">
    <citation type="journal article" date="1996" name="Science">
        <title>Complete genome sequence of the methanogenic archaeon, Methanococcus jannaschii.</title>
        <authorList>
            <person name="Bult C.J."/>
            <person name="White O."/>
            <person name="Olsen G.J."/>
            <person name="Zhou L."/>
            <person name="Fleischmann R.D."/>
            <person name="Sutton G.G."/>
            <person name="Blake J.A."/>
            <person name="FitzGerald L.M."/>
            <person name="Clayton R.A."/>
            <person name="Gocayne J.D."/>
            <person name="Kerlavage A.R."/>
            <person name="Dougherty B.A."/>
            <person name="Tomb J.-F."/>
            <person name="Adams M.D."/>
            <person name="Reich C.I."/>
            <person name="Overbeek R."/>
            <person name="Kirkness E.F."/>
            <person name="Weinstock K.G."/>
            <person name="Merrick J.M."/>
            <person name="Glodek A."/>
            <person name="Scott J.L."/>
            <person name="Geoghagen N.S.M."/>
            <person name="Weidman J.F."/>
            <person name="Fuhrmann J.L."/>
            <person name="Nguyen D."/>
            <person name="Utterback T.R."/>
            <person name="Kelley J.M."/>
            <person name="Peterson J.D."/>
            <person name="Sadow P.W."/>
            <person name="Hanna M.C."/>
            <person name="Cotton M.D."/>
            <person name="Roberts K.M."/>
            <person name="Hurst M.A."/>
            <person name="Kaine B.P."/>
            <person name="Borodovsky M."/>
            <person name="Klenk H.-P."/>
            <person name="Fraser C.M."/>
            <person name="Smith H.O."/>
            <person name="Woese C.R."/>
            <person name="Venter J.C."/>
        </authorList>
    </citation>
    <scope>NUCLEOTIDE SEQUENCE [LARGE SCALE GENOMIC DNA]</scope>
    <source>
        <strain>ATCC 43067 / DSM 2661 / JAL-1 / JCM 10045 / NBRC 100440</strain>
    </source>
</reference>
<keyword id="KW-1003">Cell membrane</keyword>
<keyword id="KW-0472">Membrane</keyword>
<keyword id="KW-1185">Reference proteome</keyword>
<keyword id="KW-0812">Transmembrane</keyword>
<keyword id="KW-1133">Transmembrane helix</keyword>
<keyword id="KW-0813">Transport</keyword>
<feature type="chain" id="PRO_0000172507" description="Uncharacterized transporter MJ0672">
    <location>
        <begin position="1"/>
        <end position="432"/>
    </location>
</feature>
<feature type="transmembrane region" description="Helical" evidence="1">
    <location>
        <begin position="7"/>
        <end position="27"/>
    </location>
</feature>
<feature type="transmembrane region" description="Helical" evidence="1">
    <location>
        <begin position="29"/>
        <end position="49"/>
    </location>
</feature>
<feature type="transmembrane region" description="Helical" evidence="1">
    <location>
        <begin position="68"/>
        <end position="88"/>
    </location>
</feature>
<feature type="transmembrane region" description="Helical" evidence="1">
    <location>
        <begin position="124"/>
        <end position="144"/>
    </location>
</feature>
<feature type="transmembrane region" description="Helical" evidence="1">
    <location>
        <begin position="156"/>
        <end position="176"/>
    </location>
</feature>
<feature type="transmembrane region" description="Helical" evidence="1">
    <location>
        <begin position="196"/>
        <end position="216"/>
    </location>
</feature>
<feature type="transmembrane region" description="Helical" evidence="1">
    <location>
        <begin position="241"/>
        <end position="261"/>
    </location>
</feature>
<feature type="transmembrane region" description="Helical" evidence="1">
    <location>
        <begin position="266"/>
        <end position="286"/>
    </location>
</feature>
<feature type="transmembrane region" description="Helical" evidence="1">
    <location>
        <begin position="291"/>
        <end position="311"/>
    </location>
</feature>
<feature type="transmembrane region" description="Helical" evidence="1">
    <location>
        <begin position="326"/>
        <end position="346"/>
    </location>
</feature>
<feature type="transmembrane region" description="Helical" evidence="1">
    <location>
        <begin position="358"/>
        <end position="378"/>
    </location>
</feature>
<feature type="transmembrane region" description="Helical" evidence="1">
    <location>
        <begin position="379"/>
        <end position="399"/>
    </location>
</feature>
<feature type="transmembrane region" description="Helical" evidence="1">
    <location>
        <begin position="412"/>
        <end position="432"/>
    </location>
</feature>
<comment type="subcellular location">
    <subcellularLocation>
        <location evidence="2">Cell membrane</location>
        <topology evidence="2">Multi-pass membrane protein</topology>
    </subcellularLocation>
</comment>
<comment type="similarity">
    <text evidence="2">Belongs to the CitM (TC 2.A.11) transporter family.</text>
</comment>
<name>Y672_METJA</name>
<organism>
    <name type="scientific">Methanocaldococcus jannaschii (strain ATCC 43067 / DSM 2661 / JAL-1 / JCM 10045 / NBRC 100440)</name>
    <name type="common">Methanococcus jannaschii</name>
    <dbReference type="NCBI Taxonomy" id="243232"/>
    <lineage>
        <taxon>Archaea</taxon>
        <taxon>Methanobacteriati</taxon>
        <taxon>Methanobacteriota</taxon>
        <taxon>Methanomada group</taxon>
        <taxon>Methanococci</taxon>
        <taxon>Methanococcales</taxon>
        <taxon>Methanocaldococcaceae</taxon>
        <taxon>Methanocaldococcus</taxon>
    </lineage>
</organism>
<accession>Q58086</accession>
<proteinExistence type="inferred from homology"/>